<comment type="function">
    <text evidence="1">This is one of the proteins that bind and probably mediate the attachment of the 5S RNA into the large ribosomal subunit, where it forms part of the central protuberance. In the 70S ribosome it contacts protein S13 of the 30S subunit (bridge B1b), connecting the 2 subunits; this bridge is implicated in subunit movement. Contacts the P site tRNA; the 5S rRNA and some of its associated proteins might help stabilize positioning of ribosome-bound tRNAs.</text>
</comment>
<comment type="subunit">
    <text evidence="1">Part of the 50S ribosomal subunit; part of the 5S rRNA/L5/L18/L25 subcomplex. Contacts the 5S rRNA and the P site tRNA. Forms a bridge to the 30S subunit in the 70S ribosome.</text>
</comment>
<comment type="similarity">
    <text evidence="1">Belongs to the universal ribosomal protein uL5 family.</text>
</comment>
<reference key="1">
    <citation type="journal article" date="2009" name="PLoS Genet.">
        <title>Organised genome dynamics in the Escherichia coli species results in highly diverse adaptive paths.</title>
        <authorList>
            <person name="Touchon M."/>
            <person name="Hoede C."/>
            <person name="Tenaillon O."/>
            <person name="Barbe V."/>
            <person name="Baeriswyl S."/>
            <person name="Bidet P."/>
            <person name="Bingen E."/>
            <person name="Bonacorsi S."/>
            <person name="Bouchier C."/>
            <person name="Bouvet O."/>
            <person name="Calteau A."/>
            <person name="Chiapello H."/>
            <person name="Clermont O."/>
            <person name="Cruveiller S."/>
            <person name="Danchin A."/>
            <person name="Diard M."/>
            <person name="Dossat C."/>
            <person name="Karoui M.E."/>
            <person name="Frapy E."/>
            <person name="Garry L."/>
            <person name="Ghigo J.M."/>
            <person name="Gilles A.M."/>
            <person name="Johnson J."/>
            <person name="Le Bouguenec C."/>
            <person name="Lescat M."/>
            <person name="Mangenot S."/>
            <person name="Martinez-Jehanne V."/>
            <person name="Matic I."/>
            <person name="Nassif X."/>
            <person name="Oztas S."/>
            <person name="Petit M.A."/>
            <person name="Pichon C."/>
            <person name="Rouy Z."/>
            <person name="Ruf C.S."/>
            <person name="Schneider D."/>
            <person name="Tourret J."/>
            <person name="Vacherie B."/>
            <person name="Vallenet D."/>
            <person name="Medigue C."/>
            <person name="Rocha E.P.C."/>
            <person name="Denamur E."/>
        </authorList>
    </citation>
    <scope>NUCLEOTIDE SEQUENCE [LARGE SCALE GENOMIC DNA]</scope>
    <source>
        <strain>UMN026 / ExPEC</strain>
    </source>
</reference>
<accession>B7NDS9</accession>
<name>RL5_ECOLU</name>
<gene>
    <name evidence="1" type="primary">rplE</name>
    <name type="ordered locus">ECUMN_3781</name>
</gene>
<sequence length="179" mass="20302">MAKLHDYYKDEVVKKLMTEFNYNSVMQVPRVEKITLNMGVGEAIADKKLLDNAAADLAAISGQKPLITKARKSVAGFKIRQGYPIGCKVTLRGERMWEFFERLITIAVPRIRDFRGLSAKSFDGRGNYSMGVREQIIFPEIDYDKVDRVRGLDITITTTAKSDEEGRALLAAFDFPFRK</sequence>
<keyword id="KW-0007">Acetylation</keyword>
<keyword id="KW-0687">Ribonucleoprotein</keyword>
<keyword id="KW-0689">Ribosomal protein</keyword>
<keyword id="KW-0694">RNA-binding</keyword>
<keyword id="KW-0699">rRNA-binding</keyword>
<keyword id="KW-0820">tRNA-binding</keyword>
<dbReference type="EMBL" id="CU928163">
    <property type="protein sequence ID" value="CAR14929.1"/>
    <property type="molecule type" value="Genomic_DNA"/>
</dbReference>
<dbReference type="RefSeq" id="WP_001096200.1">
    <property type="nucleotide sequence ID" value="NC_011751.1"/>
</dbReference>
<dbReference type="RefSeq" id="YP_002414434.1">
    <property type="nucleotide sequence ID" value="NC_011751.1"/>
</dbReference>
<dbReference type="SMR" id="B7NDS9"/>
<dbReference type="STRING" id="585056.ECUMN_3781"/>
<dbReference type="GeneID" id="93778679"/>
<dbReference type="KEGG" id="eum:ECUMN_3781"/>
<dbReference type="PATRIC" id="fig|585056.7.peg.3956"/>
<dbReference type="HOGENOM" id="CLU_061015_2_1_6"/>
<dbReference type="PRO" id="PR:B7NDS9"/>
<dbReference type="Proteomes" id="UP000007097">
    <property type="component" value="Chromosome"/>
</dbReference>
<dbReference type="GO" id="GO:1990904">
    <property type="term" value="C:ribonucleoprotein complex"/>
    <property type="evidence" value="ECO:0007669"/>
    <property type="project" value="UniProtKB-KW"/>
</dbReference>
<dbReference type="GO" id="GO:0005840">
    <property type="term" value="C:ribosome"/>
    <property type="evidence" value="ECO:0007669"/>
    <property type="project" value="UniProtKB-KW"/>
</dbReference>
<dbReference type="GO" id="GO:0019843">
    <property type="term" value="F:rRNA binding"/>
    <property type="evidence" value="ECO:0007669"/>
    <property type="project" value="UniProtKB-UniRule"/>
</dbReference>
<dbReference type="GO" id="GO:0003735">
    <property type="term" value="F:structural constituent of ribosome"/>
    <property type="evidence" value="ECO:0007669"/>
    <property type="project" value="InterPro"/>
</dbReference>
<dbReference type="GO" id="GO:0000049">
    <property type="term" value="F:tRNA binding"/>
    <property type="evidence" value="ECO:0007669"/>
    <property type="project" value="UniProtKB-UniRule"/>
</dbReference>
<dbReference type="GO" id="GO:0006412">
    <property type="term" value="P:translation"/>
    <property type="evidence" value="ECO:0007669"/>
    <property type="project" value="UniProtKB-UniRule"/>
</dbReference>
<dbReference type="FunFam" id="3.30.1440.10:FF:000001">
    <property type="entry name" value="50S ribosomal protein L5"/>
    <property type="match status" value="1"/>
</dbReference>
<dbReference type="Gene3D" id="3.30.1440.10">
    <property type="match status" value="1"/>
</dbReference>
<dbReference type="HAMAP" id="MF_01333_B">
    <property type="entry name" value="Ribosomal_uL5_B"/>
    <property type="match status" value="1"/>
</dbReference>
<dbReference type="InterPro" id="IPR002132">
    <property type="entry name" value="Ribosomal_uL5"/>
</dbReference>
<dbReference type="InterPro" id="IPR020930">
    <property type="entry name" value="Ribosomal_uL5_bac-type"/>
</dbReference>
<dbReference type="InterPro" id="IPR031309">
    <property type="entry name" value="Ribosomal_uL5_C"/>
</dbReference>
<dbReference type="InterPro" id="IPR020929">
    <property type="entry name" value="Ribosomal_uL5_CS"/>
</dbReference>
<dbReference type="InterPro" id="IPR022803">
    <property type="entry name" value="Ribosomal_uL5_dom_sf"/>
</dbReference>
<dbReference type="InterPro" id="IPR031310">
    <property type="entry name" value="Ribosomal_uL5_N"/>
</dbReference>
<dbReference type="NCBIfam" id="NF000585">
    <property type="entry name" value="PRK00010.1"/>
    <property type="match status" value="1"/>
</dbReference>
<dbReference type="PANTHER" id="PTHR11994">
    <property type="entry name" value="60S RIBOSOMAL PROTEIN L11-RELATED"/>
    <property type="match status" value="1"/>
</dbReference>
<dbReference type="Pfam" id="PF00281">
    <property type="entry name" value="Ribosomal_L5"/>
    <property type="match status" value="1"/>
</dbReference>
<dbReference type="Pfam" id="PF00673">
    <property type="entry name" value="Ribosomal_L5_C"/>
    <property type="match status" value="1"/>
</dbReference>
<dbReference type="PIRSF" id="PIRSF002161">
    <property type="entry name" value="Ribosomal_L5"/>
    <property type="match status" value="1"/>
</dbReference>
<dbReference type="SUPFAM" id="SSF55282">
    <property type="entry name" value="RL5-like"/>
    <property type="match status" value="1"/>
</dbReference>
<dbReference type="PROSITE" id="PS00358">
    <property type="entry name" value="RIBOSOMAL_L5"/>
    <property type="match status" value="1"/>
</dbReference>
<organism>
    <name type="scientific">Escherichia coli O17:K52:H18 (strain UMN026 / ExPEC)</name>
    <dbReference type="NCBI Taxonomy" id="585056"/>
    <lineage>
        <taxon>Bacteria</taxon>
        <taxon>Pseudomonadati</taxon>
        <taxon>Pseudomonadota</taxon>
        <taxon>Gammaproteobacteria</taxon>
        <taxon>Enterobacterales</taxon>
        <taxon>Enterobacteriaceae</taxon>
        <taxon>Escherichia</taxon>
    </lineage>
</organism>
<proteinExistence type="inferred from homology"/>
<evidence type="ECO:0000255" key="1">
    <source>
        <dbReference type="HAMAP-Rule" id="MF_01333"/>
    </source>
</evidence>
<evidence type="ECO:0000305" key="2"/>
<protein>
    <recommendedName>
        <fullName evidence="1">Large ribosomal subunit protein uL5</fullName>
    </recommendedName>
    <alternativeName>
        <fullName evidence="2">50S ribosomal protein L5</fullName>
    </alternativeName>
</protein>
<feature type="chain" id="PRO_1000142398" description="Large ribosomal subunit protein uL5">
    <location>
        <begin position="1"/>
        <end position="179"/>
    </location>
</feature>
<feature type="modified residue" description="N6-acetyllysine" evidence="1">
    <location>
        <position position="3"/>
    </location>
</feature>